<proteinExistence type="inferred from homology"/>
<name>NADE_OCEIH</name>
<reference key="1">
    <citation type="journal article" date="2002" name="Nucleic Acids Res.">
        <title>Genome sequence of Oceanobacillus iheyensis isolated from the Iheya Ridge and its unexpected adaptive capabilities to extreme environments.</title>
        <authorList>
            <person name="Takami H."/>
            <person name="Takaki Y."/>
            <person name="Uchiyama I."/>
        </authorList>
    </citation>
    <scope>NUCLEOTIDE SEQUENCE [LARGE SCALE GENOMIC DNA]</scope>
    <source>
        <strain>DSM 14371 / CIP 107618 / JCM 11309 / KCTC 3954 / HTE831</strain>
    </source>
</reference>
<feature type="chain" id="PRO_0000152184" description="NH(3)-dependent NAD(+) synthetase">
    <location>
        <begin position="1"/>
        <end position="275"/>
    </location>
</feature>
<feature type="binding site" evidence="1">
    <location>
        <begin position="47"/>
        <end position="54"/>
    </location>
    <ligand>
        <name>ATP</name>
        <dbReference type="ChEBI" id="CHEBI:30616"/>
    </ligand>
</feature>
<feature type="binding site" evidence="1">
    <location>
        <position position="53"/>
    </location>
    <ligand>
        <name>Mg(2+)</name>
        <dbReference type="ChEBI" id="CHEBI:18420"/>
    </ligand>
</feature>
<feature type="binding site" evidence="1">
    <location>
        <position position="141"/>
    </location>
    <ligand>
        <name>deamido-NAD(+)</name>
        <dbReference type="ChEBI" id="CHEBI:58437"/>
    </ligand>
</feature>
<feature type="binding site" evidence="1">
    <location>
        <position position="161"/>
    </location>
    <ligand>
        <name>ATP</name>
        <dbReference type="ChEBI" id="CHEBI:30616"/>
    </ligand>
</feature>
<feature type="binding site" evidence="1">
    <location>
        <position position="166"/>
    </location>
    <ligand>
        <name>Mg(2+)</name>
        <dbReference type="ChEBI" id="CHEBI:18420"/>
    </ligand>
</feature>
<feature type="binding site" evidence="1">
    <location>
        <position position="174"/>
    </location>
    <ligand>
        <name>deamido-NAD(+)</name>
        <dbReference type="ChEBI" id="CHEBI:58437"/>
    </ligand>
</feature>
<feature type="binding site" evidence="1">
    <location>
        <position position="181"/>
    </location>
    <ligand>
        <name>deamido-NAD(+)</name>
        <dbReference type="ChEBI" id="CHEBI:58437"/>
    </ligand>
</feature>
<feature type="binding site" evidence="1">
    <location>
        <position position="190"/>
    </location>
    <ligand>
        <name>ATP</name>
        <dbReference type="ChEBI" id="CHEBI:30616"/>
    </ligand>
</feature>
<feature type="binding site" evidence="1">
    <location>
        <position position="212"/>
    </location>
    <ligand>
        <name>ATP</name>
        <dbReference type="ChEBI" id="CHEBI:30616"/>
    </ligand>
</feature>
<feature type="binding site" evidence="1">
    <location>
        <begin position="261"/>
        <end position="262"/>
    </location>
    <ligand>
        <name>deamido-NAD(+)</name>
        <dbReference type="ChEBI" id="CHEBI:58437"/>
    </ligand>
</feature>
<dbReference type="EC" id="6.3.1.5" evidence="1"/>
<dbReference type="EMBL" id="BA000028">
    <property type="protein sequence ID" value="BAC12343.1"/>
    <property type="molecule type" value="Genomic_DNA"/>
</dbReference>
<dbReference type="RefSeq" id="WP_011064792.1">
    <property type="nucleotide sequence ID" value="NC_004193.1"/>
</dbReference>
<dbReference type="SMR" id="Q8ET75"/>
<dbReference type="STRING" id="221109.gene:10732590"/>
<dbReference type="KEGG" id="oih:OB0387"/>
<dbReference type="eggNOG" id="COG0171">
    <property type="taxonomic scope" value="Bacteria"/>
</dbReference>
<dbReference type="HOGENOM" id="CLU_059327_3_0_9"/>
<dbReference type="OrthoDB" id="9803818at2"/>
<dbReference type="PhylomeDB" id="Q8ET75"/>
<dbReference type="UniPathway" id="UPA00253">
    <property type="reaction ID" value="UER00333"/>
</dbReference>
<dbReference type="Proteomes" id="UP000000822">
    <property type="component" value="Chromosome"/>
</dbReference>
<dbReference type="GO" id="GO:0005737">
    <property type="term" value="C:cytoplasm"/>
    <property type="evidence" value="ECO:0007669"/>
    <property type="project" value="InterPro"/>
</dbReference>
<dbReference type="GO" id="GO:0005524">
    <property type="term" value="F:ATP binding"/>
    <property type="evidence" value="ECO:0007669"/>
    <property type="project" value="UniProtKB-UniRule"/>
</dbReference>
<dbReference type="GO" id="GO:0004359">
    <property type="term" value="F:glutaminase activity"/>
    <property type="evidence" value="ECO:0007669"/>
    <property type="project" value="InterPro"/>
</dbReference>
<dbReference type="GO" id="GO:0046872">
    <property type="term" value="F:metal ion binding"/>
    <property type="evidence" value="ECO:0007669"/>
    <property type="project" value="UniProtKB-KW"/>
</dbReference>
<dbReference type="GO" id="GO:0003952">
    <property type="term" value="F:NAD+ synthase (glutamine-hydrolyzing) activity"/>
    <property type="evidence" value="ECO:0007669"/>
    <property type="project" value="InterPro"/>
</dbReference>
<dbReference type="GO" id="GO:0008795">
    <property type="term" value="F:NAD+ synthase activity"/>
    <property type="evidence" value="ECO:0007669"/>
    <property type="project" value="UniProtKB-UniRule"/>
</dbReference>
<dbReference type="GO" id="GO:0009435">
    <property type="term" value="P:NAD biosynthetic process"/>
    <property type="evidence" value="ECO:0007669"/>
    <property type="project" value="UniProtKB-UniRule"/>
</dbReference>
<dbReference type="CDD" id="cd00553">
    <property type="entry name" value="NAD_synthase"/>
    <property type="match status" value="1"/>
</dbReference>
<dbReference type="FunFam" id="3.40.50.620:FF:000015">
    <property type="entry name" value="NH(3)-dependent NAD(+) synthetase"/>
    <property type="match status" value="1"/>
</dbReference>
<dbReference type="Gene3D" id="3.40.50.620">
    <property type="entry name" value="HUPs"/>
    <property type="match status" value="1"/>
</dbReference>
<dbReference type="HAMAP" id="MF_00193">
    <property type="entry name" value="NadE_ammonia_dep"/>
    <property type="match status" value="1"/>
</dbReference>
<dbReference type="InterPro" id="IPR022310">
    <property type="entry name" value="NAD/GMP_synthase"/>
</dbReference>
<dbReference type="InterPro" id="IPR003694">
    <property type="entry name" value="NAD_synthase"/>
</dbReference>
<dbReference type="InterPro" id="IPR022926">
    <property type="entry name" value="NH(3)-dep_NAD(+)_synth"/>
</dbReference>
<dbReference type="InterPro" id="IPR014729">
    <property type="entry name" value="Rossmann-like_a/b/a_fold"/>
</dbReference>
<dbReference type="NCBIfam" id="TIGR00552">
    <property type="entry name" value="nadE"/>
    <property type="match status" value="1"/>
</dbReference>
<dbReference type="NCBIfam" id="NF001979">
    <property type="entry name" value="PRK00768.1"/>
    <property type="match status" value="1"/>
</dbReference>
<dbReference type="PANTHER" id="PTHR23090">
    <property type="entry name" value="NH 3 /GLUTAMINE-DEPENDENT NAD + SYNTHETASE"/>
    <property type="match status" value="1"/>
</dbReference>
<dbReference type="PANTHER" id="PTHR23090:SF7">
    <property type="entry name" value="NH(3)-DEPENDENT NAD(+) SYNTHETASE"/>
    <property type="match status" value="1"/>
</dbReference>
<dbReference type="Pfam" id="PF02540">
    <property type="entry name" value="NAD_synthase"/>
    <property type="match status" value="1"/>
</dbReference>
<dbReference type="SUPFAM" id="SSF52402">
    <property type="entry name" value="Adenine nucleotide alpha hydrolases-like"/>
    <property type="match status" value="1"/>
</dbReference>
<gene>
    <name evidence="1" type="primary">nadE</name>
    <name type="ordered locus">OB0387</name>
</gene>
<evidence type="ECO:0000255" key="1">
    <source>
        <dbReference type="HAMAP-Rule" id="MF_00193"/>
    </source>
</evidence>
<comment type="function">
    <text evidence="1">Catalyzes the ATP-dependent amidation of deamido-NAD to form NAD. Uses ammonia as a nitrogen source.</text>
</comment>
<comment type="catalytic activity">
    <reaction evidence="1">
        <text>deamido-NAD(+) + NH4(+) + ATP = AMP + diphosphate + NAD(+) + H(+)</text>
        <dbReference type="Rhea" id="RHEA:21188"/>
        <dbReference type="ChEBI" id="CHEBI:15378"/>
        <dbReference type="ChEBI" id="CHEBI:28938"/>
        <dbReference type="ChEBI" id="CHEBI:30616"/>
        <dbReference type="ChEBI" id="CHEBI:33019"/>
        <dbReference type="ChEBI" id="CHEBI:57540"/>
        <dbReference type="ChEBI" id="CHEBI:58437"/>
        <dbReference type="ChEBI" id="CHEBI:456215"/>
        <dbReference type="EC" id="6.3.1.5"/>
    </reaction>
</comment>
<comment type="pathway">
    <text evidence="1">Cofactor biosynthesis; NAD(+) biosynthesis; NAD(+) from deamido-NAD(+) (ammonia route): step 1/1.</text>
</comment>
<comment type="subunit">
    <text evidence="1">Homodimer.</text>
</comment>
<comment type="similarity">
    <text evidence="1">Belongs to the NAD synthetase family.</text>
</comment>
<protein>
    <recommendedName>
        <fullName evidence="1">NH(3)-dependent NAD(+) synthetase</fullName>
        <ecNumber evidence="1">6.3.1.5</ecNumber>
    </recommendedName>
</protein>
<sequence length="275" mass="30788">MSDLQKTIIEDLHVEPEIDPKQEIRTRVDFLKSYLKKHTFSTGYVLGMSGGQDSTLLSKLTQIAVNELNEENSTNTYQFIGMKLPYGVQKDADDVDDAIKFVEPSKVLTVNIKESVDASVKALDGAGVEISDFLKGNEKARERMKAQYSVAGAFNCFVLGTDHAAEAVTGFYTKHGDGACDLAPLFGLNKRQGKQMLVALNCPEHLYNKKPTADLEDDRPALPDEEALGVTYEQIDEFLEGKEVAEDSKRTIEGHYLKTMHKREGEVTLYDQWWK</sequence>
<keyword id="KW-0067">ATP-binding</keyword>
<keyword id="KW-0436">Ligase</keyword>
<keyword id="KW-0460">Magnesium</keyword>
<keyword id="KW-0479">Metal-binding</keyword>
<keyword id="KW-0520">NAD</keyword>
<keyword id="KW-0547">Nucleotide-binding</keyword>
<keyword id="KW-1185">Reference proteome</keyword>
<accession>Q8ET75</accession>
<organism>
    <name type="scientific">Oceanobacillus iheyensis (strain DSM 14371 / CIP 107618 / JCM 11309 / KCTC 3954 / HTE831)</name>
    <dbReference type="NCBI Taxonomy" id="221109"/>
    <lineage>
        <taxon>Bacteria</taxon>
        <taxon>Bacillati</taxon>
        <taxon>Bacillota</taxon>
        <taxon>Bacilli</taxon>
        <taxon>Bacillales</taxon>
        <taxon>Bacillaceae</taxon>
        <taxon>Oceanobacillus</taxon>
    </lineage>
</organism>